<accession>A4XV90</accession>
<proteinExistence type="inferred from homology"/>
<protein>
    <recommendedName>
        <fullName evidence="1">Succinate--CoA ligase [ADP-forming] subunit beta</fullName>
        <ecNumber evidence="1">6.2.1.5</ecNumber>
    </recommendedName>
    <alternativeName>
        <fullName evidence="1">Succinyl-CoA synthetase subunit beta</fullName>
        <shortName evidence="1">SCS-beta</shortName>
    </alternativeName>
</protein>
<name>SUCC_ECTM1</name>
<dbReference type="EC" id="6.2.1.5" evidence="1"/>
<dbReference type="EMBL" id="CP000680">
    <property type="protein sequence ID" value="ABP85256.1"/>
    <property type="molecule type" value="Genomic_DNA"/>
</dbReference>
<dbReference type="SMR" id="A4XV90"/>
<dbReference type="STRING" id="399739.Pmen_2500"/>
<dbReference type="KEGG" id="pmy:Pmen_2500"/>
<dbReference type="PATRIC" id="fig|399739.8.peg.2526"/>
<dbReference type="eggNOG" id="COG0045">
    <property type="taxonomic scope" value="Bacteria"/>
</dbReference>
<dbReference type="HOGENOM" id="CLU_037430_0_2_6"/>
<dbReference type="OrthoDB" id="9802602at2"/>
<dbReference type="UniPathway" id="UPA00223">
    <property type="reaction ID" value="UER00999"/>
</dbReference>
<dbReference type="GO" id="GO:0005829">
    <property type="term" value="C:cytosol"/>
    <property type="evidence" value="ECO:0007669"/>
    <property type="project" value="TreeGrafter"/>
</dbReference>
<dbReference type="GO" id="GO:0042709">
    <property type="term" value="C:succinate-CoA ligase complex"/>
    <property type="evidence" value="ECO:0007669"/>
    <property type="project" value="TreeGrafter"/>
</dbReference>
<dbReference type="GO" id="GO:0005524">
    <property type="term" value="F:ATP binding"/>
    <property type="evidence" value="ECO:0007669"/>
    <property type="project" value="UniProtKB-UniRule"/>
</dbReference>
<dbReference type="GO" id="GO:0000287">
    <property type="term" value="F:magnesium ion binding"/>
    <property type="evidence" value="ECO:0007669"/>
    <property type="project" value="UniProtKB-UniRule"/>
</dbReference>
<dbReference type="GO" id="GO:0004775">
    <property type="term" value="F:succinate-CoA ligase (ADP-forming) activity"/>
    <property type="evidence" value="ECO:0007669"/>
    <property type="project" value="UniProtKB-UniRule"/>
</dbReference>
<dbReference type="GO" id="GO:0004776">
    <property type="term" value="F:succinate-CoA ligase (GDP-forming) activity"/>
    <property type="evidence" value="ECO:0007669"/>
    <property type="project" value="RHEA"/>
</dbReference>
<dbReference type="GO" id="GO:0006104">
    <property type="term" value="P:succinyl-CoA metabolic process"/>
    <property type="evidence" value="ECO:0007669"/>
    <property type="project" value="TreeGrafter"/>
</dbReference>
<dbReference type="GO" id="GO:0006099">
    <property type="term" value="P:tricarboxylic acid cycle"/>
    <property type="evidence" value="ECO:0007669"/>
    <property type="project" value="UniProtKB-UniRule"/>
</dbReference>
<dbReference type="FunFam" id="3.30.1490.20:FF:000002">
    <property type="entry name" value="Succinate--CoA ligase [ADP-forming] subunit beta"/>
    <property type="match status" value="1"/>
</dbReference>
<dbReference type="FunFam" id="3.30.470.20:FF:000002">
    <property type="entry name" value="Succinate--CoA ligase [ADP-forming] subunit beta"/>
    <property type="match status" value="1"/>
</dbReference>
<dbReference type="FunFam" id="3.40.50.261:FF:000001">
    <property type="entry name" value="Succinate--CoA ligase [ADP-forming] subunit beta"/>
    <property type="match status" value="1"/>
</dbReference>
<dbReference type="Gene3D" id="3.30.1490.20">
    <property type="entry name" value="ATP-grasp fold, A domain"/>
    <property type="match status" value="1"/>
</dbReference>
<dbReference type="Gene3D" id="3.30.470.20">
    <property type="entry name" value="ATP-grasp fold, B domain"/>
    <property type="match status" value="1"/>
</dbReference>
<dbReference type="Gene3D" id="3.40.50.261">
    <property type="entry name" value="Succinyl-CoA synthetase domains"/>
    <property type="match status" value="1"/>
</dbReference>
<dbReference type="HAMAP" id="MF_00558">
    <property type="entry name" value="Succ_CoA_beta"/>
    <property type="match status" value="1"/>
</dbReference>
<dbReference type="InterPro" id="IPR011761">
    <property type="entry name" value="ATP-grasp"/>
</dbReference>
<dbReference type="InterPro" id="IPR013650">
    <property type="entry name" value="ATP-grasp_succ-CoA_synth-type"/>
</dbReference>
<dbReference type="InterPro" id="IPR013815">
    <property type="entry name" value="ATP_grasp_subdomain_1"/>
</dbReference>
<dbReference type="InterPro" id="IPR017866">
    <property type="entry name" value="Succ-CoA_synthase_bsu_CS"/>
</dbReference>
<dbReference type="InterPro" id="IPR005811">
    <property type="entry name" value="SUCC_ACL_C"/>
</dbReference>
<dbReference type="InterPro" id="IPR005809">
    <property type="entry name" value="Succ_CoA_ligase-like_bsu"/>
</dbReference>
<dbReference type="InterPro" id="IPR016102">
    <property type="entry name" value="Succinyl-CoA_synth-like"/>
</dbReference>
<dbReference type="NCBIfam" id="NF001913">
    <property type="entry name" value="PRK00696.1"/>
    <property type="match status" value="1"/>
</dbReference>
<dbReference type="NCBIfam" id="TIGR01016">
    <property type="entry name" value="sucCoAbeta"/>
    <property type="match status" value="1"/>
</dbReference>
<dbReference type="PANTHER" id="PTHR11815:SF10">
    <property type="entry name" value="SUCCINATE--COA LIGASE [GDP-FORMING] SUBUNIT BETA, MITOCHONDRIAL"/>
    <property type="match status" value="1"/>
</dbReference>
<dbReference type="PANTHER" id="PTHR11815">
    <property type="entry name" value="SUCCINYL-COA SYNTHETASE BETA CHAIN"/>
    <property type="match status" value="1"/>
</dbReference>
<dbReference type="Pfam" id="PF08442">
    <property type="entry name" value="ATP-grasp_2"/>
    <property type="match status" value="1"/>
</dbReference>
<dbReference type="Pfam" id="PF00549">
    <property type="entry name" value="Ligase_CoA"/>
    <property type="match status" value="1"/>
</dbReference>
<dbReference type="PIRSF" id="PIRSF001554">
    <property type="entry name" value="SucCS_beta"/>
    <property type="match status" value="1"/>
</dbReference>
<dbReference type="SUPFAM" id="SSF56059">
    <property type="entry name" value="Glutathione synthetase ATP-binding domain-like"/>
    <property type="match status" value="1"/>
</dbReference>
<dbReference type="SUPFAM" id="SSF52210">
    <property type="entry name" value="Succinyl-CoA synthetase domains"/>
    <property type="match status" value="1"/>
</dbReference>
<dbReference type="PROSITE" id="PS50975">
    <property type="entry name" value="ATP_GRASP"/>
    <property type="match status" value="1"/>
</dbReference>
<dbReference type="PROSITE" id="PS01217">
    <property type="entry name" value="SUCCINYL_COA_LIG_3"/>
    <property type="match status" value="1"/>
</dbReference>
<gene>
    <name evidence="1" type="primary">sucC</name>
    <name type="ordered locus">Pmen_2500</name>
</gene>
<feature type="chain" id="PRO_1000082170" description="Succinate--CoA ligase [ADP-forming] subunit beta">
    <location>
        <begin position="1"/>
        <end position="388"/>
    </location>
</feature>
<feature type="domain" description="ATP-grasp" evidence="1">
    <location>
        <begin position="9"/>
        <end position="244"/>
    </location>
</feature>
<feature type="binding site" evidence="1">
    <location>
        <position position="46"/>
    </location>
    <ligand>
        <name>ATP</name>
        <dbReference type="ChEBI" id="CHEBI:30616"/>
    </ligand>
</feature>
<feature type="binding site" evidence="1">
    <location>
        <begin position="53"/>
        <end position="55"/>
    </location>
    <ligand>
        <name>ATP</name>
        <dbReference type="ChEBI" id="CHEBI:30616"/>
    </ligand>
</feature>
<feature type="binding site" evidence="1">
    <location>
        <position position="99"/>
    </location>
    <ligand>
        <name>ATP</name>
        <dbReference type="ChEBI" id="CHEBI:30616"/>
    </ligand>
</feature>
<feature type="binding site" evidence="1">
    <location>
        <position position="102"/>
    </location>
    <ligand>
        <name>ATP</name>
        <dbReference type="ChEBI" id="CHEBI:30616"/>
    </ligand>
</feature>
<feature type="binding site" evidence="1">
    <location>
        <position position="107"/>
    </location>
    <ligand>
        <name>ATP</name>
        <dbReference type="ChEBI" id="CHEBI:30616"/>
    </ligand>
</feature>
<feature type="binding site" evidence="1">
    <location>
        <position position="199"/>
    </location>
    <ligand>
        <name>Mg(2+)</name>
        <dbReference type="ChEBI" id="CHEBI:18420"/>
    </ligand>
</feature>
<feature type="binding site" evidence="1">
    <location>
        <position position="213"/>
    </location>
    <ligand>
        <name>Mg(2+)</name>
        <dbReference type="ChEBI" id="CHEBI:18420"/>
    </ligand>
</feature>
<feature type="binding site" evidence="1">
    <location>
        <position position="264"/>
    </location>
    <ligand>
        <name>substrate</name>
        <note>ligand shared with subunit alpha</note>
    </ligand>
</feature>
<feature type="binding site" evidence="1">
    <location>
        <begin position="321"/>
        <end position="323"/>
    </location>
    <ligand>
        <name>substrate</name>
        <note>ligand shared with subunit alpha</note>
    </ligand>
</feature>
<keyword id="KW-0067">ATP-binding</keyword>
<keyword id="KW-0436">Ligase</keyword>
<keyword id="KW-0460">Magnesium</keyword>
<keyword id="KW-0479">Metal-binding</keyword>
<keyword id="KW-0547">Nucleotide-binding</keyword>
<keyword id="KW-0816">Tricarboxylic acid cycle</keyword>
<organism>
    <name type="scientific">Ectopseudomonas mendocina (strain ymp)</name>
    <name type="common">Pseudomonas mendocina</name>
    <dbReference type="NCBI Taxonomy" id="399739"/>
    <lineage>
        <taxon>Bacteria</taxon>
        <taxon>Pseudomonadati</taxon>
        <taxon>Pseudomonadota</taxon>
        <taxon>Gammaproteobacteria</taxon>
        <taxon>Pseudomonadales</taxon>
        <taxon>Pseudomonadaceae</taxon>
        <taxon>Ectopseudomonas</taxon>
    </lineage>
</organism>
<sequence>MNLHEYQGKQLFAEYGLPVSKGFAVDTPEEAAEACEKIGGSEWVVKAQVHAGGRGKAGGVKLVKSKEDAKAFAANWLGKRLVTYQTDANGQPVSKILVESCTDIAKELYLGAVVDRSSRRIVFMASTEGGVDIEKVAHETPEKILKATIDPLVGAQPYQGRELAFQLGLEGDQVKQFTHIFVGLAKLFQDYDLALLEVNPLVIKADGNLHCLDAKINIDSNAMYRQPKLRAMHDPSQDDPREAHAQKWELNYVALEGNIGCMVNGAGLAMGTMDIVNLHGGQPANFLDVGGGATKERVTEAFKIILSDDNVKAVLVNIFGGIVRCDMIAEGIIGAVKEVGVKIPVVVRLEGNNAELGAKVLADSGLNIIAATSLTDAAQQVVKAAEGK</sequence>
<evidence type="ECO:0000255" key="1">
    <source>
        <dbReference type="HAMAP-Rule" id="MF_00558"/>
    </source>
</evidence>
<reference key="1">
    <citation type="submission" date="2007-04" db="EMBL/GenBank/DDBJ databases">
        <title>Complete sequence of Pseudomonas mendocina ymp.</title>
        <authorList>
            <consortium name="US DOE Joint Genome Institute"/>
            <person name="Copeland A."/>
            <person name="Lucas S."/>
            <person name="Lapidus A."/>
            <person name="Barry K."/>
            <person name="Glavina del Rio T."/>
            <person name="Dalin E."/>
            <person name="Tice H."/>
            <person name="Pitluck S."/>
            <person name="Kiss H."/>
            <person name="Brettin T."/>
            <person name="Detter J.C."/>
            <person name="Bruce D."/>
            <person name="Han C."/>
            <person name="Schmutz J."/>
            <person name="Larimer F."/>
            <person name="Land M."/>
            <person name="Hauser L."/>
            <person name="Kyrpides N."/>
            <person name="Mikhailova N."/>
            <person name="Hersman L."/>
            <person name="Dubois J."/>
            <person name="Maurice P."/>
            <person name="Richardson P."/>
        </authorList>
    </citation>
    <scope>NUCLEOTIDE SEQUENCE [LARGE SCALE GENOMIC DNA]</scope>
    <source>
        <strain>ymp</strain>
    </source>
</reference>
<comment type="function">
    <text evidence="1">Succinyl-CoA synthetase functions in the citric acid cycle (TCA), coupling the hydrolysis of succinyl-CoA to the synthesis of either ATP or GTP and thus represents the only step of substrate-level phosphorylation in the TCA. The beta subunit provides nucleotide specificity of the enzyme and binds the substrate succinate, while the binding sites for coenzyme A and phosphate are found in the alpha subunit.</text>
</comment>
<comment type="catalytic activity">
    <reaction evidence="1">
        <text>succinate + ATP + CoA = succinyl-CoA + ADP + phosphate</text>
        <dbReference type="Rhea" id="RHEA:17661"/>
        <dbReference type="ChEBI" id="CHEBI:30031"/>
        <dbReference type="ChEBI" id="CHEBI:30616"/>
        <dbReference type="ChEBI" id="CHEBI:43474"/>
        <dbReference type="ChEBI" id="CHEBI:57287"/>
        <dbReference type="ChEBI" id="CHEBI:57292"/>
        <dbReference type="ChEBI" id="CHEBI:456216"/>
        <dbReference type="EC" id="6.2.1.5"/>
    </reaction>
    <physiologicalReaction direction="right-to-left" evidence="1">
        <dbReference type="Rhea" id="RHEA:17663"/>
    </physiologicalReaction>
</comment>
<comment type="catalytic activity">
    <reaction evidence="1">
        <text>GTP + succinate + CoA = succinyl-CoA + GDP + phosphate</text>
        <dbReference type="Rhea" id="RHEA:22120"/>
        <dbReference type="ChEBI" id="CHEBI:30031"/>
        <dbReference type="ChEBI" id="CHEBI:37565"/>
        <dbReference type="ChEBI" id="CHEBI:43474"/>
        <dbReference type="ChEBI" id="CHEBI:57287"/>
        <dbReference type="ChEBI" id="CHEBI:57292"/>
        <dbReference type="ChEBI" id="CHEBI:58189"/>
    </reaction>
    <physiologicalReaction direction="right-to-left" evidence="1">
        <dbReference type="Rhea" id="RHEA:22122"/>
    </physiologicalReaction>
</comment>
<comment type="cofactor">
    <cofactor evidence="1">
        <name>Mg(2+)</name>
        <dbReference type="ChEBI" id="CHEBI:18420"/>
    </cofactor>
    <text evidence="1">Binds 1 Mg(2+) ion per subunit.</text>
</comment>
<comment type="pathway">
    <text evidence="1">Carbohydrate metabolism; tricarboxylic acid cycle; succinate from succinyl-CoA (ligase route): step 1/1.</text>
</comment>
<comment type="subunit">
    <text evidence="1">Heterotetramer of two alpha and two beta subunits.</text>
</comment>
<comment type="similarity">
    <text evidence="1">Belongs to the succinate/malate CoA ligase beta subunit family.</text>
</comment>